<name>LPXK_HALHL</name>
<accession>A1WWF8</accession>
<gene>
    <name evidence="1" type="primary">lpxK</name>
    <name type="ordered locus">Hhal_1245</name>
</gene>
<proteinExistence type="inferred from homology"/>
<dbReference type="EC" id="2.7.1.130" evidence="1"/>
<dbReference type="EMBL" id="CP000544">
    <property type="protein sequence ID" value="ABM62020.1"/>
    <property type="molecule type" value="Genomic_DNA"/>
</dbReference>
<dbReference type="RefSeq" id="WP_011814043.1">
    <property type="nucleotide sequence ID" value="NC_008789.1"/>
</dbReference>
<dbReference type="SMR" id="A1WWF8"/>
<dbReference type="STRING" id="349124.Hhal_1245"/>
<dbReference type="KEGG" id="hha:Hhal_1245"/>
<dbReference type="eggNOG" id="COG1663">
    <property type="taxonomic scope" value="Bacteria"/>
</dbReference>
<dbReference type="HOGENOM" id="CLU_038816_2_0_6"/>
<dbReference type="OrthoDB" id="9766423at2"/>
<dbReference type="UniPathway" id="UPA00359">
    <property type="reaction ID" value="UER00482"/>
</dbReference>
<dbReference type="Proteomes" id="UP000000647">
    <property type="component" value="Chromosome"/>
</dbReference>
<dbReference type="GO" id="GO:0005886">
    <property type="term" value="C:plasma membrane"/>
    <property type="evidence" value="ECO:0007669"/>
    <property type="project" value="TreeGrafter"/>
</dbReference>
<dbReference type="GO" id="GO:0005524">
    <property type="term" value="F:ATP binding"/>
    <property type="evidence" value="ECO:0007669"/>
    <property type="project" value="UniProtKB-UniRule"/>
</dbReference>
<dbReference type="GO" id="GO:0009029">
    <property type="term" value="F:tetraacyldisaccharide 4'-kinase activity"/>
    <property type="evidence" value="ECO:0007669"/>
    <property type="project" value="UniProtKB-UniRule"/>
</dbReference>
<dbReference type="GO" id="GO:0009245">
    <property type="term" value="P:lipid A biosynthetic process"/>
    <property type="evidence" value="ECO:0007669"/>
    <property type="project" value="UniProtKB-UniRule"/>
</dbReference>
<dbReference type="GO" id="GO:0009244">
    <property type="term" value="P:lipopolysaccharide core region biosynthetic process"/>
    <property type="evidence" value="ECO:0007669"/>
    <property type="project" value="TreeGrafter"/>
</dbReference>
<dbReference type="HAMAP" id="MF_00409">
    <property type="entry name" value="LpxK"/>
    <property type="match status" value="1"/>
</dbReference>
<dbReference type="InterPro" id="IPR003758">
    <property type="entry name" value="LpxK"/>
</dbReference>
<dbReference type="InterPro" id="IPR027417">
    <property type="entry name" value="P-loop_NTPase"/>
</dbReference>
<dbReference type="NCBIfam" id="TIGR00682">
    <property type="entry name" value="lpxK"/>
    <property type="match status" value="1"/>
</dbReference>
<dbReference type="PANTHER" id="PTHR42724">
    <property type="entry name" value="TETRAACYLDISACCHARIDE 4'-KINASE"/>
    <property type="match status" value="1"/>
</dbReference>
<dbReference type="PANTHER" id="PTHR42724:SF1">
    <property type="entry name" value="TETRAACYLDISACCHARIDE 4'-KINASE, MITOCHONDRIAL-RELATED"/>
    <property type="match status" value="1"/>
</dbReference>
<dbReference type="Pfam" id="PF02606">
    <property type="entry name" value="LpxK"/>
    <property type="match status" value="1"/>
</dbReference>
<dbReference type="SUPFAM" id="SSF52540">
    <property type="entry name" value="P-loop containing nucleoside triphosphate hydrolases"/>
    <property type="match status" value="1"/>
</dbReference>
<feature type="chain" id="PRO_0000291208" description="Tetraacyldisaccharide 4'-kinase">
    <location>
        <begin position="1"/>
        <end position="327"/>
    </location>
</feature>
<feature type="binding site" evidence="1">
    <location>
        <begin position="56"/>
        <end position="63"/>
    </location>
    <ligand>
        <name>ATP</name>
        <dbReference type="ChEBI" id="CHEBI:30616"/>
    </ligand>
</feature>
<protein>
    <recommendedName>
        <fullName evidence="1">Tetraacyldisaccharide 4'-kinase</fullName>
        <ecNumber evidence="1">2.7.1.130</ecNumber>
    </recommendedName>
    <alternativeName>
        <fullName evidence="1">Lipid A 4'-kinase</fullName>
    </alternativeName>
</protein>
<evidence type="ECO:0000255" key="1">
    <source>
        <dbReference type="HAMAP-Rule" id="MF_00409"/>
    </source>
</evidence>
<comment type="function">
    <text evidence="1">Transfers the gamma-phosphate of ATP to the 4'-position of a tetraacyldisaccharide 1-phosphate intermediate (termed DS-1-P) to form tetraacyldisaccharide 1,4'-bis-phosphate (lipid IVA).</text>
</comment>
<comment type="catalytic activity">
    <reaction evidence="1">
        <text>a lipid A disaccharide + ATP = a lipid IVA + ADP + H(+)</text>
        <dbReference type="Rhea" id="RHEA:67840"/>
        <dbReference type="ChEBI" id="CHEBI:15378"/>
        <dbReference type="ChEBI" id="CHEBI:30616"/>
        <dbReference type="ChEBI" id="CHEBI:176343"/>
        <dbReference type="ChEBI" id="CHEBI:176425"/>
        <dbReference type="ChEBI" id="CHEBI:456216"/>
        <dbReference type="EC" id="2.7.1.130"/>
    </reaction>
</comment>
<comment type="pathway">
    <text evidence="1">Glycolipid biosynthesis; lipid IV(A) biosynthesis; lipid IV(A) from (3R)-3-hydroxytetradecanoyl-[acyl-carrier-protein] and UDP-N-acetyl-alpha-D-glucosamine: step 6/6.</text>
</comment>
<comment type="similarity">
    <text evidence="1">Belongs to the LpxK family.</text>
</comment>
<reference key="1">
    <citation type="submission" date="2006-12" db="EMBL/GenBank/DDBJ databases">
        <title>Complete sequence of Halorhodospira halophila SL1.</title>
        <authorList>
            <consortium name="US DOE Joint Genome Institute"/>
            <person name="Copeland A."/>
            <person name="Lucas S."/>
            <person name="Lapidus A."/>
            <person name="Barry K."/>
            <person name="Detter J.C."/>
            <person name="Glavina del Rio T."/>
            <person name="Hammon N."/>
            <person name="Israni S."/>
            <person name="Dalin E."/>
            <person name="Tice H."/>
            <person name="Pitluck S."/>
            <person name="Saunders E."/>
            <person name="Brettin T."/>
            <person name="Bruce D."/>
            <person name="Han C."/>
            <person name="Tapia R."/>
            <person name="Schmutz J."/>
            <person name="Larimer F."/>
            <person name="Land M."/>
            <person name="Hauser L."/>
            <person name="Kyrpides N."/>
            <person name="Mikhailova N."/>
            <person name="Hoff W."/>
            <person name="Richardson P."/>
        </authorList>
    </citation>
    <scope>NUCLEOTIDE SEQUENCE [LARGE SCALE GENOMIC DNA]</scope>
    <source>
        <strain>DSM 244 / SL1</strain>
    </source>
</reference>
<organism>
    <name type="scientific">Halorhodospira halophila (strain DSM 244 / SL1)</name>
    <name type="common">Ectothiorhodospira halophila (strain DSM 244 / SL1)</name>
    <dbReference type="NCBI Taxonomy" id="349124"/>
    <lineage>
        <taxon>Bacteria</taxon>
        <taxon>Pseudomonadati</taxon>
        <taxon>Pseudomonadota</taxon>
        <taxon>Gammaproteobacteria</taxon>
        <taxon>Chromatiales</taxon>
        <taxon>Ectothiorhodospiraceae</taxon>
        <taxon>Halorhodospira</taxon>
    </lineage>
</organism>
<keyword id="KW-0067">ATP-binding</keyword>
<keyword id="KW-0418">Kinase</keyword>
<keyword id="KW-0441">Lipid A biosynthesis</keyword>
<keyword id="KW-0444">Lipid biosynthesis</keyword>
<keyword id="KW-0443">Lipid metabolism</keyword>
<keyword id="KW-0547">Nucleotide-binding</keyword>
<keyword id="KW-1185">Reference proteome</keyword>
<keyword id="KW-0808">Transferase</keyword>
<sequence>MSVPGFWLEDGLPARALAPLAALYGAGVVLRRGLYQRGWLHRPASPVPVIVVGNLFVGGTGKTPLVAWLVTQLREYGWHPAIVARGYGGRAGKGPVAVTADSDPADSGDEPLLLARRCAVPVFVGSDRPATVQAAYQAGCDVVVSDDGLQHYRMRRDAEIVVLDAHRRLGNRRLLPAGPLREPIGRLAGVDIVAVNGDAVPEGDCVFHLQPGAPRAVDGSQRPWPGGEAHAVAGIGHPERFFASLQEVGIGVAERHVFPDHHAYSSQDLSFADERPIIMTEKDAVKCRDLPQADRLWYLPVELEPGCELTAAVSGLLTRLHAREGRV</sequence>